<keyword id="KW-0963">Cytoplasm</keyword>
<keyword id="KW-0251">Elongation factor</keyword>
<keyword id="KW-0342">GTP-binding</keyword>
<keyword id="KW-0488">Methylation</keyword>
<keyword id="KW-0547">Nucleotide-binding</keyword>
<keyword id="KW-0648">Protein biosynthesis</keyword>
<dbReference type="EMBL" id="AB048204">
    <property type="protein sequence ID" value="BAB96818.1"/>
    <property type="molecule type" value="mRNA"/>
</dbReference>
<dbReference type="EMBL" id="AB098024">
    <property type="protein sequence ID" value="BAC77640.1"/>
    <property type="molecule type" value="Genomic_DNA"/>
</dbReference>
<dbReference type="SMR" id="Q8LPC4"/>
<dbReference type="GO" id="GO:0005737">
    <property type="term" value="C:cytoplasm"/>
    <property type="evidence" value="ECO:0007669"/>
    <property type="project" value="UniProtKB-SubCell"/>
</dbReference>
<dbReference type="GO" id="GO:0005525">
    <property type="term" value="F:GTP binding"/>
    <property type="evidence" value="ECO:0007669"/>
    <property type="project" value="UniProtKB-KW"/>
</dbReference>
<dbReference type="GO" id="GO:0003924">
    <property type="term" value="F:GTPase activity"/>
    <property type="evidence" value="ECO:0007669"/>
    <property type="project" value="InterPro"/>
</dbReference>
<dbReference type="GO" id="GO:0003746">
    <property type="term" value="F:translation elongation factor activity"/>
    <property type="evidence" value="ECO:0007669"/>
    <property type="project" value="UniProtKB-KW"/>
</dbReference>
<dbReference type="CDD" id="cd01883">
    <property type="entry name" value="EF1_alpha"/>
    <property type="match status" value="1"/>
</dbReference>
<dbReference type="CDD" id="cd03693">
    <property type="entry name" value="EF1_alpha_II"/>
    <property type="match status" value="1"/>
</dbReference>
<dbReference type="CDD" id="cd03705">
    <property type="entry name" value="EF1_alpha_III"/>
    <property type="match status" value="1"/>
</dbReference>
<dbReference type="FunFam" id="2.40.30.10:FF:000003">
    <property type="entry name" value="Elongation factor 1-alpha"/>
    <property type="match status" value="1"/>
</dbReference>
<dbReference type="FunFam" id="2.40.30.10:FF:000005">
    <property type="entry name" value="Elongation factor 1-alpha"/>
    <property type="match status" value="1"/>
</dbReference>
<dbReference type="FunFam" id="3.40.50.300:FF:000255">
    <property type="entry name" value="Elongation factor 1-alpha"/>
    <property type="match status" value="1"/>
</dbReference>
<dbReference type="Gene3D" id="3.40.50.300">
    <property type="entry name" value="P-loop containing nucleotide triphosphate hydrolases"/>
    <property type="match status" value="1"/>
</dbReference>
<dbReference type="Gene3D" id="2.40.30.10">
    <property type="entry name" value="Translation factors"/>
    <property type="match status" value="2"/>
</dbReference>
<dbReference type="HAMAP" id="MF_00118_A">
    <property type="entry name" value="EF_Tu_A"/>
    <property type="match status" value="1"/>
</dbReference>
<dbReference type="InterPro" id="IPR004161">
    <property type="entry name" value="EFTu-like_2"/>
</dbReference>
<dbReference type="InterPro" id="IPR031157">
    <property type="entry name" value="G_TR_CS"/>
</dbReference>
<dbReference type="InterPro" id="IPR054696">
    <property type="entry name" value="GTP-eEF1A_C"/>
</dbReference>
<dbReference type="InterPro" id="IPR027417">
    <property type="entry name" value="P-loop_NTPase"/>
</dbReference>
<dbReference type="InterPro" id="IPR000795">
    <property type="entry name" value="T_Tr_GTP-bd_dom"/>
</dbReference>
<dbReference type="InterPro" id="IPR050100">
    <property type="entry name" value="TRAFAC_GTPase_members"/>
</dbReference>
<dbReference type="InterPro" id="IPR009000">
    <property type="entry name" value="Transl_B-barrel_sf"/>
</dbReference>
<dbReference type="InterPro" id="IPR009001">
    <property type="entry name" value="Transl_elong_EF1A/Init_IF2_C"/>
</dbReference>
<dbReference type="InterPro" id="IPR004539">
    <property type="entry name" value="Transl_elong_EF1A_euk/arc"/>
</dbReference>
<dbReference type="NCBIfam" id="TIGR00483">
    <property type="entry name" value="EF-1_alpha"/>
    <property type="match status" value="1"/>
</dbReference>
<dbReference type="NCBIfam" id="NF008969">
    <property type="entry name" value="PRK12317.1"/>
    <property type="match status" value="1"/>
</dbReference>
<dbReference type="PANTHER" id="PTHR23115">
    <property type="entry name" value="TRANSLATION FACTOR"/>
    <property type="match status" value="1"/>
</dbReference>
<dbReference type="Pfam" id="PF22594">
    <property type="entry name" value="GTP-eEF1A_C"/>
    <property type="match status" value="1"/>
</dbReference>
<dbReference type="Pfam" id="PF00009">
    <property type="entry name" value="GTP_EFTU"/>
    <property type="match status" value="1"/>
</dbReference>
<dbReference type="Pfam" id="PF03144">
    <property type="entry name" value="GTP_EFTU_D2"/>
    <property type="match status" value="1"/>
</dbReference>
<dbReference type="PRINTS" id="PR00315">
    <property type="entry name" value="ELONGATNFCT"/>
</dbReference>
<dbReference type="SUPFAM" id="SSF50465">
    <property type="entry name" value="EF-Tu/eEF-1alpha/eIF2-gamma C-terminal domain"/>
    <property type="match status" value="1"/>
</dbReference>
<dbReference type="SUPFAM" id="SSF52540">
    <property type="entry name" value="P-loop containing nucleoside triphosphate hydrolases"/>
    <property type="match status" value="1"/>
</dbReference>
<dbReference type="SUPFAM" id="SSF50447">
    <property type="entry name" value="Translation proteins"/>
    <property type="match status" value="1"/>
</dbReference>
<dbReference type="PROSITE" id="PS00301">
    <property type="entry name" value="G_TR_1"/>
    <property type="match status" value="1"/>
</dbReference>
<dbReference type="PROSITE" id="PS51722">
    <property type="entry name" value="G_TR_2"/>
    <property type="match status" value="1"/>
</dbReference>
<accession>Q8LPC4</accession>
<organism>
    <name type="scientific">Pyropia yezoensis</name>
    <name type="common">Susabi-nori</name>
    <name type="synonym">Porphyra yezoensis</name>
    <dbReference type="NCBI Taxonomy" id="2788"/>
    <lineage>
        <taxon>Eukaryota</taxon>
        <taxon>Rhodophyta</taxon>
        <taxon>Bangiophyceae</taxon>
        <taxon>Bangiales</taxon>
        <taxon>Bangiaceae</taxon>
        <taxon>Pyropia</taxon>
    </lineage>
</organism>
<name>EF1A_PYRYE</name>
<feature type="chain" id="PRO_0000277249" description="Elongation factor 1-alpha">
    <location>
        <begin position="1"/>
        <end position="449"/>
    </location>
</feature>
<feature type="domain" description="tr-type G">
    <location>
        <begin position="5"/>
        <end position="234"/>
    </location>
</feature>
<feature type="region of interest" description="G1" evidence="1">
    <location>
        <begin position="14"/>
        <end position="21"/>
    </location>
</feature>
<feature type="region of interest" description="G2" evidence="1">
    <location>
        <begin position="70"/>
        <end position="74"/>
    </location>
</feature>
<feature type="region of interest" description="G3" evidence="1">
    <location>
        <begin position="91"/>
        <end position="94"/>
    </location>
</feature>
<feature type="region of interest" description="G4" evidence="1">
    <location>
        <begin position="153"/>
        <end position="156"/>
    </location>
</feature>
<feature type="region of interest" description="G5" evidence="1">
    <location>
        <begin position="194"/>
        <end position="196"/>
    </location>
</feature>
<feature type="binding site" evidence="1">
    <location>
        <begin position="14"/>
        <end position="21"/>
    </location>
    <ligand>
        <name>GTP</name>
        <dbReference type="ChEBI" id="CHEBI:37565"/>
    </ligand>
</feature>
<feature type="binding site" evidence="1">
    <location>
        <begin position="91"/>
        <end position="95"/>
    </location>
    <ligand>
        <name>GTP</name>
        <dbReference type="ChEBI" id="CHEBI:37565"/>
    </ligand>
</feature>
<feature type="binding site" evidence="1">
    <location>
        <begin position="153"/>
        <end position="156"/>
    </location>
    <ligand>
        <name>GTP</name>
        <dbReference type="ChEBI" id="CHEBI:37565"/>
    </ligand>
</feature>
<feature type="modified residue" description="N6,N6-dimethyllysine" evidence="2">
    <location>
        <position position="55"/>
    </location>
</feature>
<feature type="modified residue" description="N6,N6,N6-trimethyllysine" evidence="2">
    <location>
        <position position="79"/>
    </location>
</feature>
<feature type="modified residue" description="N6,N6,N6-trimethyllysine" evidence="2">
    <location>
        <position position="187"/>
    </location>
</feature>
<feature type="modified residue" description="N6-methyllysine" evidence="2">
    <location>
        <position position="265"/>
    </location>
</feature>
<feature type="modified residue" description="N6,N6,N6-trimethyllysine" evidence="2">
    <location>
        <position position="310"/>
    </location>
</feature>
<feature type="modified residue" description="N6,N6,N6-trimethyllysine" evidence="2">
    <location>
        <position position="400"/>
    </location>
</feature>
<protein>
    <recommendedName>
        <fullName>Elongation factor 1-alpha</fullName>
        <shortName>EF-1-alpha</shortName>
    </recommendedName>
</protein>
<evidence type="ECO:0000250" key="1"/>
<evidence type="ECO:0000250" key="2">
    <source>
        <dbReference type="UniProtKB" id="Q8GTY0"/>
    </source>
</evidence>
<evidence type="ECO:0000305" key="3"/>
<reference key="1">
    <citation type="journal article" date="2002" name="Phycol. Res.">
        <title>Isolation, characterization and expression of a cDNA encoding an elongation factor-1 alpha from Porphyra yezoensis (Bangiales, Rhodophyta).</title>
        <authorList>
            <person name="Fukuda S."/>
            <person name="Ootsuka S."/>
            <person name="Kitade Y."/>
            <person name="Watanabe T."/>
            <person name="Saga N."/>
        </authorList>
    </citation>
    <scope>NUCLEOTIDE SEQUENCE [MRNA]</scope>
    <source>
        <strain>TU-1</strain>
    </source>
</reference>
<reference key="2">
    <citation type="journal article" date="2003" name="J. Appl. Phycol.">
        <title>Isolation and characterization of an elongation factor-1 alpha gene in Porphyra yezoensis (Rhodophyta).</title>
        <authorList>
            <person name="Fukuda S."/>
            <person name="Kitade Y."/>
            <person name="Miyamoto H."/>
            <person name="Nagashima S."/>
            <person name="Takahashi S."/>
            <person name="Ohba T."/>
            <person name="Asada K."/>
            <person name="Kato I."/>
            <person name="Saga N."/>
        </authorList>
    </citation>
    <scope>NUCLEOTIDE SEQUENCE [GENOMIC DNA]</scope>
    <source>
        <strain>TU-1</strain>
    </source>
</reference>
<proteinExistence type="evidence at transcript level"/>
<sequence>MGKEKQHVSIVVIGHVDSGKSTTTGHLIYKCGGIEKRAIEKFEKEAAEMGKGSFKYAWVLDKLKAERERGITIDIALWKFETEKYSFTIIDAPGHRDFIKNMITGTSQADLAILVIASPPGEFEAGISQNGQTREHALLAYTLGVKQMIVACNKMDDKNVNWSQDRYEEVSKEMDLYLKKVGYNPAKVPKVPTSGWTGENLFERTDKTHALGKWYKGPCLLEALDNCDPPKRPVDKPLRLPLQDVYKIGGIGTVPVGRVETGLIKPGMVVTFAPSGLSTEVKSVEMHHEALPQAGPGDNVGFNVKNVSVKDLKRGYVCGDSKNDPPKGCASFNAQVIILNHPGEIHAGYAPVLDCHTAHIACKFSELILKMDRRSGKKLEDTPKMIKSGDAAMVKMVASKPMCVEAFTQYPPLGRFAVRDMRQTVAVGVIKSVEKKEVEGKMTKSAAKK</sequence>
<comment type="function">
    <text>This protein promotes the GTP-dependent binding of aminoacyl-tRNA to the A-site of ribosomes during protein biosynthesis.</text>
</comment>
<comment type="subcellular location">
    <subcellularLocation>
        <location>Cytoplasm</location>
    </subcellularLocation>
</comment>
<comment type="similarity">
    <text evidence="3">Belongs to the TRAFAC class translation factor GTPase superfamily. Classic translation factor GTPase family. EF-Tu/EF-1A subfamily.</text>
</comment>